<gene>
    <name evidence="1" type="primary">kdpB1</name>
    <name type="ordered locus">lin2829</name>
</gene>
<protein>
    <recommendedName>
        <fullName evidence="1">Potassium-transporting ATPase ATP-binding subunit 1</fullName>
        <ecNumber evidence="1">7.2.2.6</ecNumber>
    </recommendedName>
    <alternativeName>
        <fullName evidence="1">ATP phosphohydrolase [potassium-transporting] B chain 1</fullName>
    </alternativeName>
    <alternativeName>
        <fullName evidence="1">Potassium-binding and translocating subunit B 1</fullName>
    </alternativeName>
    <alternativeName>
        <fullName evidence="1">Potassium-translocating ATPase B chain 1</fullName>
    </alternativeName>
</protein>
<sequence>MMENGIWKDALIQSMKKLSPKLQVKNPVMLLVYVGAILATSLYFLGFFGISDEKAGYTLAIALILWFTVLFANFAEAIAEGRGRAQADSLKMARKDVLARKLKNLEDKSDVIEVASNDLKKGDIVYVLANEQIPMDGEVIEGAASVDESAITGESAPVIRESGGDRSAVTGGTTLVSDWLVIRVTAVSGESFLDKMIAMVEGASRKKTPNEIALQILLVTLSIIFLAVSATLLPFTEFASKQAGAGSAISITNVIALLVCLAPTTIGALLSSIGIAGMSRLNQANVLAMSGRAIEAAGDVDVLLLDKTGTITLGNRKASEFLPVDGVTEQELADAAQLSSIADETAEGRSIVVLAKERFDIRGRDFAEMHAEFVPFTATTRMSGIDYQGNTIRKGAADAVRAYVSANGGTYPKECDTIVSKVAGAGGTPLVVVRNNKVLGVIYLKDIVKNGVKERFLDLRKMGIKTIMITGDNPMTAAAIAAEAGVDDFLAEATPEAKLELIREYQREGHLVAMTGDGTNDAPALAQADVAVAMNTGTQAAKEAGNMVDLDSSPTKLIDIVRIGKQLLMTRGALTTFSVANDLAKYFAIIPVLFYGIFPQLEALNLMDLTSPTSAILSAIIYNAVIIIFLIPLSLKGVKYREMPAGKLLSRNMLIYGLGGLIAPFIAIKLIDMLLTVLGIV</sequence>
<organism>
    <name type="scientific">Listeria innocua serovar 6a (strain ATCC BAA-680 / CLIP 11262)</name>
    <dbReference type="NCBI Taxonomy" id="272626"/>
    <lineage>
        <taxon>Bacteria</taxon>
        <taxon>Bacillati</taxon>
        <taxon>Bacillota</taxon>
        <taxon>Bacilli</taxon>
        <taxon>Bacillales</taxon>
        <taxon>Listeriaceae</taxon>
        <taxon>Listeria</taxon>
    </lineage>
</organism>
<proteinExistence type="inferred from homology"/>
<name>KDPB1_LISIN</name>
<feature type="chain" id="PRO_0000046121" description="Potassium-transporting ATPase ATP-binding subunit 1">
    <location>
        <begin position="1"/>
        <end position="681"/>
    </location>
</feature>
<feature type="transmembrane region" description="Helical" evidence="1">
    <location>
        <begin position="30"/>
        <end position="50"/>
    </location>
</feature>
<feature type="transmembrane region" description="Helical" evidence="1">
    <location>
        <begin position="59"/>
        <end position="79"/>
    </location>
</feature>
<feature type="transmembrane region" description="Helical" evidence="1">
    <location>
        <begin position="216"/>
        <end position="236"/>
    </location>
</feature>
<feature type="transmembrane region" description="Helical" evidence="1">
    <location>
        <begin position="255"/>
        <end position="275"/>
    </location>
</feature>
<feature type="transmembrane region" description="Helical" evidence="1">
    <location>
        <begin position="587"/>
        <end position="607"/>
    </location>
</feature>
<feature type="transmembrane region" description="Helical" evidence="1">
    <location>
        <begin position="615"/>
        <end position="635"/>
    </location>
</feature>
<feature type="transmembrane region" description="Helical" evidence="1">
    <location>
        <begin position="661"/>
        <end position="681"/>
    </location>
</feature>
<feature type="active site" description="4-aspartylphosphate intermediate" evidence="1">
    <location>
        <position position="306"/>
    </location>
</feature>
<feature type="binding site" evidence="1">
    <location>
        <position position="343"/>
    </location>
    <ligand>
        <name>ATP</name>
        <dbReference type="ChEBI" id="CHEBI:30616"/>
    </ligand>
</feature>
<feature type="binding site" evidence="1">
    <location>
        <position position="347"/>
    </location>
    <ligand>
        <name>ATP</name>
        <dbReference type="ChEBI" id="CHEBI:30616"/>
    </ligand>
</feature>
<feature type="binding site" evidence="1">
    <location>
        <begin position="376"/>
        <end position="383"/>
    </location>
    <ligand>
        <name>ATP</name>
        <dbReference type="ChEBI" id="CHEBI:30616"/>
    </ligand>
</feature>
<feature type="binding site" evidence="1">
    <location>
        <position position="394"/>
    </location>
    <ligand>
        <name>ATP</name>
        <dbReference type="ChEBI" id="CHEBI:30616"/>
    </ligand>
</feature>
<feature type="binding site" evidence="1">
    <location>
        <position position="517"/>
    </location>
    <ligand>
        <name>Mg(2+)</name>
        <dbReference type="ChEBI" id="CHEBI:18420"/>
    </ligand>
</feature>
<feature type="binding site" evidence="1">
    <location>
        <position position="521"/>
    </location>
    <ligand>
        <name>Mg(2+)</name>
        <dbReference type="ChEBI" id="CHEBI:18420"/>
    </ligand>
</feature>
<accession>Q927G0</accession>
<keyword id="KW-0067">ATP-binding</keyword>
<keyword id="KW-1003">Cell membrane</keyword>
<keyword id="KW-0406">Ion transport</keyword>
<keyword id="KW-0460">Magnesium</keyword>
<keyword id="KW-0472">Membrane</keyword>
<keyword id="KW-0479">Metal-binding</keyword>
<keyword id="KW-0547">Nucleotide-binding</keyword>
<keyword id="KW-0597">Phosphoprotein</keyword>
<keyword id="KW-0630">Potassium</keyword>
<keyword id="KW-0633">Potassium transport</keyword>
<keyword id="KW-1278">Translocase</keyword>
<keyword id="KW-0812">Transmembrane</keyword>
<keyword id="KW-1133">Transmembrane helix</keyword>
<keyword id="KW-0813">Transport</keyword>
<dbReference type="EC" id="7.2.2.6" evidence="1"/>
<dbReference type="EMBL" id="AL596173">
    <property type="protein sequence ID" value="CAC98055.1"/>
    <property type="molecule type" value="Genomic_DNA"/>
</dbReference>
<dbReference type="PIR" id="AG1785">
    <property type="entry name" value="AG1785"/>
</dbReference>
<dbReference type="RefSeq" id="WP_010991396.1">
    <property type="nucleotide sequence ID" value="NC_003212.1"/>
</dbReference>
<dbReference type="SMR" id="Q927G0"/>
<dbReference type="STRING" id="272626.gene:17567216"/>
<dbReference type="GeneID" id="93236103"/>
<dbReference type="KEGG" id="lin:kdpB"/>
<dbReference type="eggNOG" id="COG2216">
    <property type="taxonomic scope" value="Bacteria"/>
</dbReference>
<dbReference type="HOGENOM" id="CLU_025728_2_0_9"/>
<dbReference type="OrthoDB" id="9813266at2"/>
<dbReference type="Proteomes" id="UP000002513">
    <property type="component" value="Chromosome"/>
</dbReference>
<dbReference type="GO" id="GO:0005886">
    <property type="term" value="C:plasma membrane"/>
    <property type="evidence" value="ECO:0007669"/>
    <property type="project" value="UniProtKB-SubCell"/>
</dbReference>
<dbReference type="GO" id="GO:0005524">
    <property type="term" value="F:ATP binding"/>
    <property type="evidence" value="ECO:0007669"/>
    <property type="project" value="UniProtKB-UniRule"/>
</dbReference>
<dbReference type="GO" id="GO:0016887">
    <property type="term" value="F:ATP hydrolysis activity"/>
    <property type="evidence" value="ECO:0007669"/>
    <property type="project" value="InterPro"/>
</dbReference>
<dbReference type="GO" id="GO:0000287">
    <property type="term" value="F:magnesium ion binding"/>
    <property type="evidence" value="ECO:0007669"/>
    <property type="project" value="UniProtKB-UniRule"/>
</dbReference>
<dbReference type="GO" id="GO:0008556">
    <property type="term" value="F:P-type potassium transmembrane transporter activity"/>
    <property type="evidence" value="ECO:0007669"/>
    <property type="project" value="UniProtKB-UniRule"/>
</dbReference>
<dbReference type="CDD" id="cd02078">
    <property type="entry name" value="P-type_ATPase_K"/>
    <property type="match status" value="1"/>
</dbReference>
<dbReference type="FunFam" id="2.70.150.10:FF:000010">
    <property type="entry name" value="Potassium-transporting ATPase ATP-binding subunit"/>
    <property type="match status" value="1"/>
</dbReference>
<dbReference type="FunFam" id="3.40.1110.10:FF:000007">
    <property type="entry name" value="Potassium-transporting ATPase ATP-binding subunit"/>
    <property type="match status" value="1"/>
</dbReference>
<dbReference type="Gene3D" id="3.40.1110.10">
    <property type="entry name" value="Calcium-transporting ATPase, cytoplasmic domain N"/>
    <property type="match status" value="1"/>
</dbReference>
<dbReference type="Gene3D" id="2.70.150.10">
    <property type="entry name" value="Calcium-transporting ATPase, cytoplasmic transduction domain A"/>
    <property type="match status" value="1"/>
</dbReference>
<dbReference type="Gene3D" id="3.40.50.1000">
    <property type="entry name" value="HAD superfamily/HAD-like"/>
    <property type="match status" value="1"/>
</dbReference>
<dbReference type="HAMAP" id="MF_00285">
    <property type="entry name" value="KdpB"/>
    <property type="match status" value="1"/>
</dbReference>
<dbReference type="InterPro" id="IPR023299">
    <property type="entry name" value="ATPase_P-typ_cyto_dom_N"/>
</dbReference>
<dbReference type="InterPro" id="IPR018303">
    <property type="entry name" value="ATPase_P-typ_P_site"/>
</dbReference>
<dbReference type="InterPro" id="IPR023298">
    <property type="entry name" value="ATPase_P-typ_TM_dom_sf"/>
</dbReference>
<dbReference type="InterPro" id="IPR008250">
    <property type="entry name" value="ATPase_P-typ_transduc_dom_A_sf"/>
</dbReference>
<dbReference type="InterPro" id="IPR036412">
    <property type="entry name" value="HAD-like_sf"/>
</dbReference>
<dbReference type="InterPro" id="IPR023214">
    <property type="entry name" value="HAD_sf"/>
</dbReference>
<dbReference type="InterPro" id="IPR006391">
    <property type="entry name" value="P-type_ATPase_bsu_IA"/>
</dbReference>
<dbReference type="InterPro" id="IPR001757">
    <property type="entry name" value="P_typ_ATPase"/>
</dbReference>
<dbReference type="InterPro" id="IPR044492">
    <property type="entry name" value="P_typ_ATPase_HD_dom"/>
</dbReference>
<dbReference type="NCBIfam" id="TIGR01494">
    <property type="entry name" value="ATPase_P-type"/>
    <property type="match status" value="2"/>
</dbReference>
<dbReference type="NCBIfam" id="TIGR01497">
    <property type="entry name" value="kdpB"/>
    <property type="match status" value="1"/>
</dbReference>
<dbReference type="PANTHER" id="PTHR43743">
    <property type="entry name" value="POTASSIUM-TRANSPORTING ATPASE ATP-BINDING SUBUNIT"/>
    <property type="match status" value="1"/>
</dbReference>
<dbReference type="PANTHER" id="PTHR43743:SF1">
    <property type="entry name" value="POTASSIUM-TRANSPORTING ATPASE ATP-BINDING SUBUNIT"/>
    <property type="match status" value="1"/>
</dbReference>
<dbReference type="Pfam" id="PF00122">
    <property type="entry name" value="E1-E2_ATPase"/>
    <property type="match status" value="1"/>
</dbReference>
<dbReference type="Pfam" id="PF00702">
    <property type="entry name" value="Hydrolase"/>
    <property type="match status" value="1"/>
</dbReference>
<dbReference type="PRINTS" id="PR00119">
    <property type="entry name" value="CATATPASE"/>
</dbReference>
<dbReference type="PRINTS" id="PR00120">
    <property type="entry name" value="HATPASE"/>
</dbReference>
<dbReference type="SFLD" id="SFLDS00003">
    <property type="entry name" value="Haloacid_Dehalogenase"/>
    <property type="match status" value="1"/>
</dbReference>
<dbReference type="SFLD" id="SFLDF00027">
    <property type="entry name" value="p-type_atpase"/>
    <property type="match status" value="1"/>
</dbReference>
<dbReference type="SUPFAM" id="SSF81653">
    <property type="entry name" value="Calcium ATPase, transduction domain A"/>
    <property type="match status" value="1"/>
</dbReference>
<dbReference type="SUPFAM" id="SSF81665">
    <property type="entry name" value="Calcium ATPase, transmembrane domain M"/>
    <property type="match status" value="1"/>
</dbReference>
<dbReference type="SUPFAM" id="SSF56784">
    <property type="entry name" value="HAD-like"/>
    <property type="match status" value="1"/>
</dbReference>
<dbReference type="PROSITE" id="PS00154">
    <property type="entry name" value="ATPASE_E1_E2"/>
    <property type="match status" value="1"/>
</dbReference>
<reference key="1">
    <citation type="journal article" date="2001" name="Science">
        <title>Comparative genomics of Listeria species.</title>
        <authorList>
            <person name="Glaser P."/>
            <person name="Frangeul L."/>
            <person name="Buchrieser C."/>
            <person name="Rusniok C."/>
            <person name="Amend A."/>
            <person name="Baquero F."/>
            <person name="Berche P."/>
            <person name="Bloecker H."/>
            <person name="Brandt P."/>
            <person name="Chakraborty T."/>
            <person name="Charbit A."/>
            <person name="Chetouani F."/>
            <person name="Couve E."/>
            <person name="de Daruvar A."/>
            <person name="Dehoux P."/>
            <person name="Domann E."/>
            <person name="Dominguez-Bernal G."/>
            <person name="Duchaud E."/>
            <person name="Durant L."/>
            <person name="Dussurget O."/>
            <person name="Entian K.-D."/>
            <person name="Fsihi H."/>
            <person name="Garcia-del Portillo F."/>
            <person name="Garrido P."/>
            <person name="Gautier L."/>
            <person name="Goebel W."/>
            <person name="Gomez-Lopez N."/>
            <person name="Hain T."/>
            <person name="Hauf J."/>
            <person name="Jackson D."/>
            <person name="Jones L.-M."/>
            <person name="Kaerst U."/>
            <person name="Kreft J."/>
            <person name="Kuhn M."/>
            <person name="Kunst F."/>
            <person name="Kurapkat G."/>
            <person name="Madueno E."/>
            <person name="Maitournam A."/>
            <person name="Mata Vicente J."/>
            <person name="Ng E."/>
            <person name="Nedjari H."/>
            <person name="Nordsiek G."/>
            <person name="Novella S."/>
            <person name="de Pablos B."/>
            <person name="Perez-Diaz J.-C."/>
            <person name="Purcell R."/>
            <person name="Remmel B."/>
            <person name="Rose M."/>
            <person name="Schlueter T."/>
            <person name="Simoes N."/>
            <person name="Tierrez A."/>
            <person name="Vazquez-Boland J.-A."/>
            <person name="Voss H."/>
            <person name="Wehland J."/>
            <person name="Cossart P."/>
        </authorList>
    </citation>
    <scope>NUCLEOTIDE SEQUENCE [LARGE SCALE GENOMIC DNA]</scope>
    <source>
        <strain>ATCC BAA-680 / CLIP 11262</strain>
    </source>
</reference>
<comment type="function">
    <text evidence="1">Part of the high-affinity ATP-driven potassium transport (or Kdp) system, which catalyzes the hydrolysis of ATP coupled with the electrogenic transport of potassium into the cytoplasm. This subunit is responsible for energy coupling to the transport system and for the release of the potassium ions to the cytoplasm.</text>
</comment>
<comment type="catalytic activity">
    <reaction evidence="1">
        <text>K(+)(out) + ATP + H2O = K(+)(in) + ADP + phosphate + H(+)</text>
        <dbReference type="Rhea" id="RHEA:16777"/>
        <dbReference type="ChEBI" id="CHEBI:15377"/>
        <dbReference type="ChEBI" id="CHEBI:15378"/>
        <dbReference type="ChEBI" id="CHEBI:29103"/>
        <dbReference type="ChEBI" id="CHEBI:30616"/>
        <dbReference type="ChEBI" id="CHEBI:43474"/>
        <dbReference type="ChEBI" id="CHEBI:456216"/>
        <dbReference type="EC" id="7.2.2.6"/>
    </reaction>
    <physiologicalReaction direction="left-to-right" evidence="1">
        <dbReference type="Rhea" id="RHEA:16778"/>
    </physiologicalReaction>
</comment>
<comment type="subunit">
    <text evidence="1">The system is composed of three essential subunits: KdpA, KdpB and KdpC.</text>
</comment>
<comment type="subcellular location">
    <subcellularLocation>
        <location evidence="1">Cell membrane</location>
        <topology evidence="1">Multi-pass membrane protein</topology>
    </subcellularLocation>
</comment>
<comment type="similarity">
    <text evidence="1">Belongs to the cation transport ATPase (P-type) (TC 3.A.3) family. Type IA subfamily.</text>
</comment>
<evidence type="ECO:0000255" key="1">
    <source>
        <dbReference type="HAMAP-Rule" id="MF_00285"/>
    </source>
</evidence>